<name>CVC2_EBVA8</name>
<feature type="chain" id="PRO_0000408261" description="Capsid vertex component 2">
    <location>
        <begin position="1"/>
        <end position="570"/>
    </location>
</feature>
<feature type="region of interest" description="Interaction with major capsid protein/MCP" evidence="1">
    <location>
        <begin position="1"/>
        <end position="54"/>
    </location>
</feature>
<feature type="region of interest" description="Disordered" evidence="2">
    <location>
        <begin position="102"/>
        <end position="123"/>
    </location>
</feature>
<protein>
    <recommendedName>
        <fullName evidence="1">Capsid vertex component 2</fullName>
    </recommendedName>
</protein>
<organismHost>
    <name type="scientific">Homo sapiens</name>
    <name type="common">Human</name>
    <dbReference type="NCBI Taxonomy" id="9606"/>
</organismHost>
<keyword id="KW-0167">Capsid protein</keyword>
<keyword id="KW-1048">Host nucleus</keyword>
<keyword id="KW-0945">Host-virus interaction</keyword>
<keyword id="KW-1185">Reference proteome</keyword>
<keyword id="KW-0231">Viral genome packaging</keyword>
<keyword id="KW-1163">Viral penetration into host nucleus</keyword>
<keyword id="KW-1188">Viral release from host cell</keyword>
<keyword id="KW-0946">Virion</keyword>
<keyword id="KW-1160">Virus entry into host cell</keyword>
<accession>P0C705</accession>
<accession>Q777B7</accession>
<proteinExistence type="inferred from homology"/>
<comment type="function">
    <text evidence="1">Capsid vertex-specific component that plays a role during viral DNA encapsidation, assuring correct genome cleavage and presumably stabilizing capsids that contain full-length viral genomes. Participates in the interaction between the capsid and the tegument through interaction with the large tegument protein/LTP.</text>
</comment>
<comment type="subunit">
    <text evidence="1">Heterodimerizes with CVC1. Interacts with major capsid protein/MCP and triplex capsid protein 1/TRX1 at the pentamer vertices. Interacts with the large tegument protein/LTP.</text>
</comment>
<comment type="subcellular location">
    <subcellularLocation>
        <location evidence="1">Virion</location>
    </subcellularLocation>
    <subcellularLocation>
        <location evidence="1">Host nucleus</location>
    </subcellularLocation>
</comment>
<comment type="similarity">
    <text evidence="1">Belongs to the herpesviridae CVC2 protein family.</text>
</comment>
<organism>
    <name type="scientific">Epstein-Barr virus (strain AG876)</name>
    <name type="common">HHV-4</name>
    <name type="synonym">Human herpesvirus 4</name>
    <dbReference type="NCBI Taxonomy" id="82830"/>
    <lineage>
        <taxon>Viruses</taxon>
        <taxon>Duplodnaviria</taxon>
        <taxon>Heunggongvirae</taxon>
        <taxon>Peploviricota</taxon>
        <taxon>Herviviricetes</taxon>
        <taxon>Herpesvirales</taxon>
        <taxon>Orthoherpesviridae</taxon>
        <taxon>Gammaherpesvirinae</taxon>
        <taxon>Lymphocryptovirus</taxon>
        <taxon>Lymphocryptovirus humangamma4</taxon>
        <taxon>Epstein-Barr virus (strain GD1)</taxon>
    </lineage>
</organism>
<gene>
    <name evidence="1" type="primary">CVC2</name>
    <name type="ORF">BVRF1</name>
</gene>
<sequence>MALSGHVLIDPARLPRDTGPELMWAPSLRNSLRVSPEALELAEREAERARSERWDRCAQVLKNRLLRVELDGIMRDHLARAEEIRQDLDAVVAFSDGLESMQVRSPSTGGRSAPAPPSPSPAQPFTRLTGNAQYAVSISPTDPPLMVAGSLAQTLLGNLYGNINQWVPSFGPWYRTMSANAMQRRVFPKQLRGNLNFTNSVSLKLMTEVVAVLEGTTQDFFSDVRHLPDLQAALILSVAYLLLQGGSSHQQRPLPASREELLELGPESLEKIIADLKAKSPGGNFMILTSGNKEARQSIAPLNRQAAYPPGTFADNKIYNLFVGAGLLPTTAALNVPGAAGRDRDLVYRIANQIFGEDVPPFSSHQWNLRVGLAALEALMLVYTLCETANLAEAATRRLHLSSLLPQAMQRRKPAMASAGMPGAYPVQTLFRHGELFRFIWAHYVRPTVAADPQASISSLFPGLVLLALELKLMDGQAPSHYAINLTGQKFDTLFEIINQKLLFHDPAAMLAARTQLRLAFEDGVGVALGRPSPMLAAREILERQFSASDDYDRLYFLTLGYLASPVAPS</sequence>
<reference key="1">
    <citation type="journal article" date="2006" name="Virology">
        <title>The genome of Epstein-Barr virus type 2 strain AG876.</title>
        <authorList>
            <person name="Dolan A."/>
            <person name="Addison C."/>
            <person name="Gatherer D."/>
            <person name="Davison A.J."/>
            <person name="McGeoch D.J."/>
        </authorList>
    </citation>
    <scope>NUCLEOTIDE SEQUENCE [LARGE SCALE GENOMIC DNA]</scope>
</reference>
<dbReference type="EMBL" id="DQ279927">
    <property type="protein sequence ID" value="ABB89279.1"/>
    <property type="molecule type" value="Genomic_DNA"/>
</dbReference>
<dbReference type="RefSeq" id="YP_001129499.1">
    <property type="nucleotide sequence ID" value="NC_009334.1"/>
</dbReference>
<dbReference type="RefSeq" id="YP_401703.1">
    <property type="nucleotide sequence ID" value="NC_007605.1"/>
</dbReference>
<dbReference type="SMR" id="P0C705"/>
<dbReference type="DNASU" id="3783732"/>
<dbReference type="GeneID" id="3783732"/>
<dbReference type="KEGG" id="vg:3783732"/>
<dbReference type="KEGG" id="vg:5176157"/>
<dbReference type="Proteomes" id="UP000007639">
    <property type="component" value="Genome"/>
</dbReference>
<dbReference type="GO" id="GO:0043657">
    <property type="term" value="C:host cell"/>
    <property type="evidence" value="ECO:0007669"/>
    <property type="project" value="GOC"/>
</dbReference>
<dbReference type="GO" id="GO:0042025">
    <property type="term" value="C:host cell nucleus"/>
    <property type="evidence" value="ECO:0007669"/>
    <property type="project" value="UniProtKB-SubCell"/>
</dbReference>
<dbReference type="GO" id="GO:0019028">
    <property type="term" value="C:viral capsid"/>
    <property type="evidence" value="ECO:0007669"/>
    <property type="project" value="UniProtKB-KW"/>
</dbReference>
<dbReference type="GO" id="GO:0046718">
    <property type="term" value="P:symbiont entry into host cell"/>
    <property type="evidence" value="ECO:0007669"/>
    <property type="project" value="UniProtKB-KW"/>
</dbReference>
<dbReference type="GO" id="GO:0019072">
    <property type="term" value="P:viral genome packaging"/>
    <property type="evidence" value="ECO:0007669"/>
    <property type="project" value="InterPro"/>
</dbReference>
<dbReference type="GO" id="GO:0075732">
    <property type="term" value="P:viral penetration into host nucleus"/>
    <property type="evidence" value="ECO:0007669"/>
    <property type="project" value="UniProtKB-KW"/>
</dbReference>
<dbReference type="HAMAP" id="MF_04025">
    <property type="entry name" value="HSV_CVC2"/>
    <property type="match status" value="1"/>
</dbReference>
<dbReference type="InterPro" id="IPR002493">
    <property type="entry name" value="Herpes_UL25"/>
</dbReference>
<dbReference type="Pfam" id="PF01499">
    <property type="entry name" value="Herpes_UL25"/>
    <property type="match status" value="1"/>
</dbReference>
<evidence type="ECO:0000255" key="1">
    <source>
        <dbReference type="HAMAP-Rule" id="MF_04025"/>
    </source>
</evidence>
<evidence type="ECO:0000256" key="2">
    <source>
        <dbReference type="SAM" id="MobiDB-lite"/>
    </source>
</evidence>